<name>YIDD_XANCP</name>
<proteinExistence type="inferred from homology"/>
<organism>
    <name type="scientific">Xanthomonas campestris pv. campestris (strain ATCC 33913 / DSM 3586 / NCPPB 528 / LMG 568 / P 25)</name>
    <dbReference type="NCBI Taxonomy" id="190485"/>
    <lineage>
        <taxon>Bacteria</taxon>
        <taxon>Pseudomonadati</taxon>
        <taxon>Pseudomonadota</taxon>
        <taxon>Gammaproteobacteria</taxon>
        <taxon>Lysobacterales</taxon>
        <taxon>Lysobacteraceae</taxon>
        <taxon>Xanthomonas</taxon>
    </lineage>
</organism>
<dbReference type="EMBL" id="AE008922">
    <property type="protein sequence ID" value="AAM41535.1"/>
    <property type="molecule type" value="Genomic_DNA"/>
</dbReference>
<dbReference type="RefSeq" id="NP_637611.1">
    <property type="nucleotide sequence ID" value="NC_003902.1"/>
</dbReference>
<dbReference type="STRING" id="190485.XCC2256"/>
<dbReference type="EnsemblBacteria" id="AAM41535">
    <property type="protein sequence ID" value="AAM41535"/>
    <property type="gene ID" value="XCC2256"/>
</dbReference>
<dbReference type="KEGG" id="xcc:XCC2256"/>
<dbReference type="eggNOG" id="COG0759">
    <property type="taxonomic scope" value="Bacteria"/>
</dbReference>
<dbReference type="HOGENOM" id="CLU_144811_2_2_6"/>
<dbReference type="OrthoDB" id="9801753at2"/>
<dbReference type="Proteomes" id="UP000001010">
    <property type="component" value="Chromosome"/>
</dbReference>
<dbReference type="GO" id="GO:0005886">
    <property type="term" value="C:plasma membrane"/>
    <property type="evidence" value="ECO:0007669"/>
    <property type="project" value="UniProtKB-SubCell"/>
</dbReference>
<dbReference type="HAMAP" id="MF_00386">
    <property type="entry name" value="UPF0161_YidD"/>
    <property type="match status" value="1"/>
</dbReference>
<dbReference type="InterPro" id="IPR002696">
    <property type="entry name" value="Membr_insert_effic_factor_YidD"/>
</dbReference>
<dbReference type="NCBIfam" id="TIGR00278">
    <property type="entry name" value="membrane protein insertion efficiency factor YidD"/>
    <property type="match status" value="1"/>
</dbReference>
<dbReference type="PANTHER" id="PTHR33383">
    <property type="entry name" value="MEMBRANE PROTEIN INSERTION EFFICIENCY FACTOR-RELATED"/>
    <property type="match status" value="1"/>
</dbReference>
<dbReference type="PANTHER" id="PTHR33383:SF1">
    <property type="entry name" value="MEMBRANE PROTEIN INSERTION EFFICIENCY FACTOR-RELATED"/>
    <property type="match status" value="1"/>
</dbReference>
<dbReference type="Pfam" id="PF01809">
    <property type="entry name" value="YidD"/>
    <property type="match status" value="1"/>
</dbReference>
<dbReference type="SMART" id="SM01234">
    <property type="entry name" value="Haemolytic"/>
    <property type="match status" value="1"/>
</dbReference>
<reference key="1">
    <citation type="journal article" date="2002" name="Nature">
        <title>Comparison of the genomes of two Xanthomonas pathogens with differing host specificities.</title>
        <authorList>
            <person name="da Silva A.C.R."/>
            <person name="Ferro J.A."/>
            <person name="Reinach F.C."/>
            <person name="Farah C.S."/>
            <person name="Furlan L.R."/>
            <person name="Quaggio R.B."/>
            <person name="Monteiro-Vitorello C.B."/>
            <person name="Van Sluys M.A."/>
            <person name="Almeida N.F. Jr."/>
            <person name="Alves L.M.C."/>
            <person name="do Amaral A.M."/>
            <person name="Bertolini M.C."/>
            <person name="Camargo L.E.A."/>
            <person name="Camarotte G."/>
            <person name="Cannavan F."/>
            <person name="Cardozo J."/>
            <person name="Chambergo F."/>
            <person name="Ciapina L.P."/>
            <person name="Cicarelli R.M.B."/>
            <person name="Coutinho L.L."/>
            <person name="Cursino-Santos J.R."/>
            <person name="El-Dorry H."/>
            <person name="Faria J.B."/>
            <person name="Ferreira A.J.S."/>
            <person name="Ferreira R.C.C."/>
            <person name="Ferro M.I.T."/>
            <person name="Formighieri E.F."/>
            <person name="Franco M.C."/>
            <person name="Greggio C.C."/>
            <person name="Gruber A."/>
            <person name="Katsuyama A.M."/>
            <person name="Kishi L.T."/>
            <person name="Leite R.P."/>
            <person name="Lemos E.G.M."/>
            <person name="Lemos M.V.F."/>
            <person name="Locali E.C."/>
            <person name="Machado M.A."/>
            <person name="Madeira A.M.B.N."/>
            <person name="Martinez-Rossi N.M."/>
            <person name="Martins E.C."/>
            <person name="Meidanis J."/>
            <person name="Menck C.F.M."/>
            <person name="Miyaki C.Y."/>
            <person name="Moon D.H."/>
            <person name="Moreira L.M."/>
            <person name="Novo M.T.M."/>
            <person name="Okura V.K."/>
            <person name="Oliveira M.C."/>
            <person name="Oliveira V.R."/>
            <person name="Pereira H.A."/>
            <person name="Rossi A."/>
            <person name="Sena J.A.D."/>
            <person name="Silva C."/>
            <person name="de Souza R.F."/>
            <person name="Spinola L.A.F."/>
            <person name="Takita M.A."/>
            <person name="Tamura R.E."/>
            <person name="Teixeira E.C."/>
            <person name="Tezza R.I.D."/>
            <person name="Trindade dos Santos M."/>
            <person name="Truffi D."/>
            <person name="Tsai S.M."/>
            <person name="White F.F."/>
            <person name="Setubal J.C."/>
            <person name="Kitajima J.P."/>
        </authorList>
    </citation>
    <scope>NUCLEOTIDE SEQUENCE [LARGE SCALE GENOMIC DNA]</scope>
    <source>
        <strain>ATCC 33913 / DSM 3586 / NCPPB 528 / LMG 568 / P 25</strain>
    </source>
</reference>
<feature type="chain" id="PRO_0000171898" description="Putative membrane protein insertion efficiency factor">
    <location>
        <begin position="1"/>
        <end position="93"/>
    </location>
</feature>
<feature type="region of interest" description="Disordered" evidence="2">
    <location>
        <begin position="72"/>
        <end position="93"/>
    </location>
</feature>
<gene>
    <name type="ordered locus">XCC2256</name>
</gene>
<protein>
    <recommendedName>
        <fullName evidence="1">Putative membrane protein insertion efficiency factor</fullName>
    </recommendedName>
</protein>
<evidence type="ECO:0000255" key="1">
    <source>
        <dbReference type="HAMAP-Rule" id="MF_00386"/>
    </source>
</evidence>
<evidence type="ECO:0000256" key="2">
    <source>
        <dbReference type="SAM" id="MobiDB-lite"/>
    </source>
</evidence>
<comment type="function">
    <text evidence="1">Could be involved in insertion of integral membrane proteins into the membrane.</text>
</comment>
<comment type="subcellular location">
    <subcellularLocation>
        <location evidence="1">Cell inner membrane</location>
        <topology evidence="1">Peripheral membrane protein</topology>
        <orientation evidence="1">Cytoplasmic side</orientation>
    </subcellularLocation>
</comment>
<comment type="similarity">
    <text evidence="1">Belongs to the UPF0161 family.</text>
</comment>
<sequence>MAYHWQVIGRLLIALLRFYKRFISPLLGPRCRFAPSCSEYAMTAIARFGPLRGSWLAARRLGRCHPFHPGGFDPVPDAPTSSPSSCRCKGPHP</sequence>
<accession>Q8P8I5</accession>
<keyword id="KW-0997">Cell inner membrane</keyword>
<keyword id="KW-1003">Cell membrane</keyword>
<keyword id="KW-0472">Membrane</keyword>
<keyword id="KW-1185">Reference proteome</keyword>